<sequence length="73" mass="8326">MDGLETTSKIKKKGWTVRHGEKGTENRLGPILVNHLCCYKKSKFTMTKQNVTASACCYRKASHYDKAKCNRKC</sequence>
<protein>
    <recommendedName>
        <fullName>Uncharacterized ORF-X protein</fullName>
    </recommendedName>
    <alternativeName>
        <fullName>Protein UPX</fullName>
    </alternativeName>
</protein>
<dbReference type="EMBL" id="M63106">
    <property type="status" value="NOT_ANNOTATED_CDS"/>
    <property type="molecule type" value="mRNA"/>
</dbReference>
<dbReference type="PIR" id="B40479">
    <property type="entry name" value="ASLJCE"/>
</dbReference>
<feature type="chain" id="PRO_0000085476" description="Uncharacterized ORF-X protein">
    <location>
        <begin position="1"/>
        <end position="73"/>
    </location>
</feature>
<proteinExistence type="predicted"/>
<reference key="1">
    <citation type="journal article" date="1991" name="Virology">
        <title>rev-like transcripts of caprine arthritis encephalitis virus.</title>
        <authorList>
            <person name="Kalinski H."/>
            <person name="Yaniv A."/>
            <person name="Mashiah P."/>
            <person name="Miki T."/>
            <person name="Tronick S.R."/>
            <person name="Gazit A."/>
        </authorList>
    </citation>
    <scope>NUCLEOTIDE SEQUENCE [MRNA]</scope>
</reference>
<organism>
    <name type="scientific">Caprine arthritis encephalitis virus</name>
    <name type="common">CAEV</name>
    <dbReference type="NCBI Taxonomy" id="11660"/>
    <lineage>
        <taxon>Viruses</taxon>
        <taxon>Riboviria</taxon>
        <taxon>Pararnavirae</taxon>
        <taxon>Artverviricota</taxon>
        <taxon>Revtraviricetes</taxon>
        <taxon>Ortervirales</taxon>
        <taxon>Retroviridae</taxon>
        <taxon>Orthoretrovirinae</taxon>
        <taxon>Lentivirus</taxon>
    </lineage>
</organism>
<gene>
    <name type="primary">vpu</name>
</gene>
<organismHost>
    <name type="scientific">Capra hircus</name>
    <name type="common">Goat</name>
    <dbReference type="NCBI Taxonomy" id="9925"/>
</organismHost>
<name>ORFX_CAEV</name>
<accession>P31834</accession>